<sequence length="100" mass="11046">MIDTTWVIILSFLLFAIGTFGLLSRRNLLFILLSLEIMLNGIILLFIAASNLHGNNDGQIMYLLVLTLAASEVAVGLALVVQIYKQQQNLDVDTLTKLRG</sequence>
<name>NUOK_SHEWM</name>
<accession>B1KJV7</accession>
<keyword id="KW-0997">Cell inner membrane</keyword>
<keyword id="KW-1003">Cell membrane</keyword>
<keyword id="KW-0472">Membrane</keyword>
<keyword id="KW-0520">NAD</keyword>
<keyword id="KW-0874">Quinone</keyword>
<keyword id="KW-1185">Reference proteome</keyword>
<keyword id="KW-1278">Translocase</keyword>
<keyword id="KW-0812">Transmembrane</keyword>
<keyword id="KW-1133">Transmembrane helix</keyword>
<keyword id="KW-0813">Transport</keyword>
<keyword id="KW-0830">Ubiquinone</keyword>
<proteinExistence type="inferred from homology"/>
<reference key="1">
    <citation type="submission" date="2008-02" db="EMBL/GenBank/DDBJ databases">
        <title>Complete sequence of Shewanella woodyi ATCC 51908.</title>
        <authorList>
            <consortium name="US DOE Joint Genome Institute"/>
            <person name="Copeland A."/>
            <person name="Lucas S."/>
            <person name="Lapidus A."/>
            <person name="Glavina del Rio T."/>
            <person name="Dalin E."/>
            <person name="Tice H."/>
            <person name="Bruce D."/>
            <person name="Goodwin L."/>
            <person name="Pitluck S."/>
            <person name="Sims D."/>
            <person name="Brettin T."/>
            <person name="Detter J.C."/>
            <person name="Han C."/>
            <person name="Kuske C.R."/>
            <person name="Schmutz J."/>
            <person name="Larimer F."/>
            <person name="Land M."/>
            <person name="Hauser L."/>
            <person name="Kyrpides N."/>
            <person name="Lykidis A."/>
            <person name="Zhao J.-S."/>
            <person name="Richardson P."/>
        </authorList>
    </citation>
    <scope>NUCLEOTIDE SEQUENCE [LARGE SCALE GENOMIC DNA]</scope>
    <source>
        <strain>ATCC 51908 / MS32</strain>
    </source>
</reference>
<protein>
    <recommendedName>
        <fullName evidence="1">NADH-quinone oxidoreductase subunit K</fullName>
        <ecNumber evidence="1">7.1.1.-</ecNumber>
    </recommendedName>
    <alternativeName>
        <fullName evidence="1">NADH dehydrogenase I subunit K</fullName>
    </alternativeName>
    <alternativeName>
        <fullName evidence="1">NDH-1 subunit K</fullName>
    </alternativeName>
</protein>
<evidence type="ECO:0000255" key="1">
    <source>
        <dbReference type="HAMAP-Rule" id="MF_01456"/>
    </source>
</evidence>
<feature type="chain" id="PRO_0000390235" description="NADH-quinone oxidoreductase subunit K">
    <location>
        <begin position="1"/>
        <end position="100"/>
    </location>
</feature>
<feature type="transmembrane region" description="Helical" evidence="1">
    <location>
        <begin position="4"/>
        <end position="24"/>
    </location>
</feature>
<feature type="transmembrane region" description="Helical" evidence="1">
    <location>
        <begin position="28"/>
        <end position="48"/>
    </location>
</feature>
<feature type="transmembrane region" description="Helical" evidence="1">
    <location>
        <begin position="60"/>
        <end position="80"/>
    </location>
</feature>
<dbReference type="EC" id="7.1.1.-" evidence="1"/>
<dbReference type="EMBL" id="CP000961">
    <property type="protein sequence ID" value="ACA87144.1"/>
    <property type="molecule type" value="Genomic_DNA"/>
</dbReference>
<dbReference type="RefSeq" id="WP_012325480.1">
    <property type="nucleotide sequence ID" value="NC_010506.1"/>
</dbReference>
<dbReference type="SMR" id="B1KJV7"/>
<dbReference type="STRING" id="392500.Swoo_2869"/>
<dbReference type="KEGG" id="swd:Swoo_2869"/>
<dbReference type="eggNOG" id="COG0713">
    <property type="taxonomic scope" value="Bacteria"/>
</dbReference>
<dbReference type="HOGENOM" id="CLU_144724_0_1_6"/>
<dbReference type="Proteomes" id="UP000002168">
    <property type="component" value="Chromosome"/>
</dbReference>
<dbReference type="GO" id="GO:0030964">
    <property type="term" value="C:NADH dehydrogenase complex"/>
    <property type="evidence" value="ECO:0007669"/>
    <property type="project" value="TreeGrafter"/>
</dbReference>
<dbReference type="GO" id="GO:0005886">
    <property type="term" value="C:plasma membrane"/>
    <property type="evidence" value="ECO:0007669"/>
    <property type="project" value="UniProtKB-SubCell"/>
</dbReference>
<dbReference type="GO" id="GO:0050136">
    <property type="term" value="F:NADH:ubiquinone reductase (non-electrogenic) activity"/>
    <property type="evidence" value="ECO:0007669"/>
    <property type="project" value="UniProtKB-UniRule"/>
</dbReference>
<dbReference type="GO" id="GO:0048038">
    <property type="term" value="F:quinone binding"/>
    <property type="evidence" value="ECO:0007669"/>
    <property type="project" value="UniProtKB-KW"/>
</dbReference>
<dbReference type="GO" id="GO:0042773">
    <property type="term" value="P:ATP synthesis coupled electron transport"/>
    <property type="evidence" value="ECO:0007669"/>
    <property type="project" value="InterPro"/>
</dbReference>
<dbReference type="FunFam" id="1.10.287.3510:FF:000001">
    <property type="entry name" value="NADH-quinone oxidoreductase subunit K"/>
    <property type="match status" value="1"/>
</dbReference>
<dbReference type="Gene3D" id="1.10.287.3510">
    <property type="match status" value="1"/>
</dbReference>
<dbReference type="HAMAP" id="MF_01456">
    <property type="entry name" value="NDH1_NuoK"/>
    <property type="match status" value="1"/>
</dbReference>
<dbReference type="InterPro" id="IPR001133">
    <property type="entry name" value="NADH_UbQ_OxRdtase_chain4L/K"/>
</dbReference>
<dbReference type="InterPro" id="IPR039428">
    <property type="entry name" value="NUOK/Mnh_C1-like"/>
</dbReference>
<dbReference type="NCBIfam" id="NF004319">
    <property type="entry name" value="PRK05715.1-1"/>
    <property type="match status" value="1"/>
</dbReference>
<dbReference type="NCBIfam" id="NF004320">
    <property type="entry name" value="PRK05715.1-2"/>
    <property type="match status" value="1"/>
</dbReference>
<dbReference type="PANTHER" id="PTHR11434:SF16">
    <property type="entry name" value="NADH-UBIQUINONE OXIDOREDUCTASE CHAIN 4L"/>
    <property type="match status" value="1"/>
</dbReference>
<dbReference type="PANTHER" id="PTHR11434">
    <property type="entry name" value="NADH-UBIQUINONE OXIDOREDUCTASE SUBUNIT ND4L"/>
    <property type="match status" value="1"/>
</dbReference>
<dbReference type="Pfam" id="PF00420">
    <property type="entry name" value="Oxidored_q2"/>
    <property type="match status" value="1"/>
</dbReference>
<gene>
    <name evidence="1" type="primary">nuoK</name>
    <name type="ordered locus">Swoo_2869</name>
</gene>
<organism>
    <name type="scientific">Shewanella woodyi (strain ATCC 51908 / MS32)</name>
    <dbReference type="NCBI Taxonomy" id="392500"/>
    <lineage>
        <taxon>Bacteria</taxon>
        <taxon>Pseudomonadati</taxon>
        <taxon>Pseudomonadota</taxon>
        <taxon>Gammaproteobacteria</taxon>
        <taxon>Alteromonadales</taxon>
        <taxon>Shewanellaceae</taxon>
        <taxon>Shewanella</taxon>
    </lineage>
</organism>
<comment type="function">
    <text evidence="1">NDH-1 shuttles electrons from NADH, via FMN and iron-sulfur (Fe-S) centers, to quinones in the respiratory chain. The immediate electron acceptor for the enzyme in this species is believed to be ubiquinone. Couples the redox reaction to proton translocation (for every two electrons transferred, four hydrogen ions are translocated across the cytoplasmic membrane), and thus conserves the redox energy in a proton gradient.</text>
</comment>
<comment type="catalytic activity">
    <reaction evidence="1">
        <text>a quinone + NADH + 5 H(+)(in) = a quinol + NAD(+) + 4 H(+)(out)</text>
        <dbReference type="Rhea" id="RHEA:57888"/>
        <dbReference type="ChEBI" id="CHEBI:15378"/>
        <dbReference type="ChEBI" id="CHEBI:24646"/>
        <dbReference type="ChEBI" id="CHEBI:57540"/>
        <dbReference type="ChEBI" id="CHEBI:57945"/>
        <dbReference type="ChEBI" id="CHEBI:132124"/>
    </reaction>
</comment>
<comment type="subunit">
    <text evidence="1">NDH-1 is composed of 13 different subunits. Subunits NuoA, H, J, K, L, M, N constitute the membrane sector of the complex.</text>
</comment>
<comment type="subcellular location">
    <subcellularLocation>
        <location evidence="1">Cell inner membrane</location>
        <topology evidence="1">Multi-pass membrane protein</topology>
    </subcellularLocation>
</comment>
<comment type="similarity">
    <text evidence="1">Belongs to the complex I subunit 4L family.</text>
</comment>